<comment type="function">
    <text>Could be involved in the regulation of nitrogen fixation.</text>
</comment>
<comment type="similarity">
    <text evidence="1">Belongs to the P(II) protein family.</text>
</comment>
<protein>
    <recommendedName>
        <fullName>Nitrogen fixation nifHD region GlnB-like protein 1</fullName>
    </recommendedName>
    <alternativeName>
        <fullName>ORF-105</fullName>
    </alternativeName>
</protein>
<dbReference type="EMBL" id="X13830">
    <property type="protein sequence ID" value="CAA32056.1"/>
    <property type="molecule type" value="Genomic_DNA"/>
</dbReference>
<dbReference type="PIR" id="S06985">
    <property type="entry name" value="S06985"/>
</dbReference>
<dbReference type="SMR" id="P25771"/>
<dbReference type="GO" id="GO:0005829">
    <property type="term" value="C:cytosol"/>
    <property type="evidence" value="ECO:0007669"/>
    <property type="project" value="TreeGrafter"/>
</dbReference>
<dbReference type="GO" id="GO:0005524">
    <property type="term" value="F:ATP binding"/>
    <property type="evidence" value="ECO:0007669"/>
    <property type="project" value="TreeGrafter"/>
</dbReference>
<dbReference type="GO" id="GO:0030234">
    <property type="term" value="F:enzyme regulator activity"/>
    <property type="evidence" value="ECO:0007669"/>
    <property type="project" value="InterPro"/>
</dbReference>
<dbReference type="GO" id="GO:0009399">
    <property type="term" value="P:nitrogen fixation"/>
    <property type="evidence" value="ECO:0007669"/>
    <property type="project" value="UniProtKB-KW"/>
</dbReference>
<dbReference type="GO" id="GO:0006808">
    <property type="term" value="P:regulation of nitrogen utilization"/>
    <property type="evidence" value="ECO:0007669"/>
    <property type="project" value="InterPro"/>
</dbReference>
<dbReference type="Gene3D" id="3.30.70.120">
    <property type="match status" value="1"/>
</dbReference>
<dbReference type="InterPro" id="IPR002187">
    <property type="entry name" value="N-reg_PII"/>
</dbReference>
<dbReference type="InterPro" id="IPR011322">
    <property type="entry name" value="N-reg_PII-like_a/b"/>
</dbReference>
<dbReference type="InterPro" id="IPR015867">
    <property type="entry name" value="N-reg_PII/ATP_PRibTrfase_C"/>
</dbReference>
<dbReference type="InterPro" id="IPR017918">
    <property type="entry name" value="N-reg_PII_CS"/>
</dbReference>
<dbReference type="PANTHER" id="PTHR30115">
    <property type="entry name" value="NITROGEN REGULATORY PROTEIN P-II"/>
    <property type="match status" value="1"/>
</dbReference>
<dbReference type="PANTHER" id="PTHR30115:SF13">
    <property type="entry name" value="PII-LIKE PROTEIN GLNBI"/>
    <property type="match status" value="1"/>
</dbReference>
<dbReference type="Pfam" id="PF00543">
    <property type="entry name" value="P-II"/>
    <property type="match status" value="1"/>
</dbReference>
<dbReference type="PRINTS" id="PR00340">
    <property type="entry name" value="PIIGLNB"/>
</dbReference>
<dbReference type="SMART" id="SM00938">
    <property type="entry name" value="P-II"/>
    <property type="match status" value="1"/>
</dbReference>
<dbReference type="SUPFAM" id="SSF54913">
    <property type="entry name" value="GlnB-like"/>
    <property type="match status" value="1"/>
</dbReference>
<dbReference type="PROSITE" id="PS00638">
    <property type="entry name" value="PII_GLNB_CTER"/>
    <property type="match status" value="1"/>
</dbReference>
<dbReference type="PROSITE" id="PS51343">
    <property type="entry name" value="PII_GLNB_DOM"/>
    <property type="match status" value="1"/>
</dbReference>
<evidence type="ECO:0000255" key="1">
    <source>
        <dbReference type="PROSITE-ProRule" id="PRU00675"/>
    </source>
</evidence>
<proteinExistence type="inferred from homology"/>
<reference key="1">
    <citation type="journal article" date="1989" name="Mol. Microbiol.">
        <title>Primary structure, functional organization and expression of nitrogenase structural genes of the thermophilic archaebacterium Methanococcus thermolithotrophicus.</title>
        <authorList>
            <person name="Souillard N."/>
            <person name="Sibold L."/>
        </authorList>
    </citation>
    <scope>NUCLEOTIDE SEQUENCE [GENOMIC DNA]</scope>
</reference>
<organism>
    <name type="scientific">Methanothermococcus thermolithotrophicus</name>
    <name type="common">Methanococcus thermolithotrophicus</name>
    <dbReference type="NCBI Taxonomy" id="2186"/>
    <lineage>
        <taxon>Archaea</taxon>
        <taxon>Methanobacteriati</taxon>
        <taxon>Methanobacteriota</taxon>
        <taxon>Methanomada group</taxon>
        <taxon>Methanococci</taxon>
        <taxon>Methanococcales</taxon>
        <taxon>Methanococcaceae</taxon>
        <taxon>Methanothermococcus</taxon>
    </lineage>
</organism>
<keyword id="KW-0535">Nitrogen fixation</keyword>
<keyword id="KW-0804">Transcription</keyword>
<keyword id="KW-0805">Transcription regulation</keyword>
<accession>P25771</accession>
<gene>
    <name type="primary">glnBA</name>
</gene>
<name>GLNB1_METTL</name>
<feature type="chain" id="PRO_0000139812" description="Nitrogen fixation nifHD region GlnB-like protein 1">
    <location>
        <begin position="1"/>
        <end position="105"/>
    </location>
</feature>
<sequence length="105" mass="11318">MKMIKAIVRPDKVDDIVDSLENAGYPAFTKINSVGRGKQGGLKVGEIFYDELPKTILLIAVNDDEVDEVVGLIKSSASTGNFGDGKIFIQPITEAYTIRTGETGI</sequence>